<feature type="chain" id="PRO_1000125936" description="Small ribosomal subunit protein uS7">
    <location>
        <begin position="1"/>
        <end position="156"/>
    </location>
</feature>
<proteinExistence type="inferred from homology"/>
<name>RS7_ECO45</name>
<protein>
    <recommendedName>
        <fullName evidence="1">Small ribosomal subunit protein uS7</fullName>
    </recommendedName>
    <alternativeName>
        <fullName evidence="2">30S ribosomal protein S7</fullName>
    </alternativeName>
</protein>
<comment type="function">
    <text evidence="1">One of the primary rRNA binding proteins, it binds directly to 16S rRNA where it nucleates assembly of the head domain of the 30S subunit. Is located at the subunit interface close to the decoding center, probably blocks exit of the E-site tRNA.</text>
</comment>
<comment type="subunit">
    <text evidence="1">Part of the 30S ribosomal subunit. Contacts proteins S9 and S11.</text>
</comment>
<comment type="similarity">
    <text evidence="1">Belongs to the universal ribosomal protein uS7 family.</text>
</comment>
<organism>
    <name type="scientific">Escherichia coli O45:K1 (strain S88 / ExPEC)</name>
    <dbReference type="NCBI Taxonomy" id="585035"/>
    <lineage>
        <taxon>Bacteria</taxon>
        <taxon>Pseudomonadati</taxon>
        <taxon>Pseudomonadota</taxon>
        <taxon>Gammaproteobacteria</taxon>
        <taxon>Enterobacterales</taxon>
        <taxon>Enterobacteriaceae</taxon>
        <taxon>Escherichia</taxon>
    </lineage>
</organism>
<accession>B7MCV6</accession>
<keyword id="KW-1185">Reference proteome</keyword>
<keyword id="KW-0687">Ribonucleoprotein</keyword>
<keyword id="KW-0689">Ribosomal protein</keyword>
<keyword id="KW-0694">RNA-binding</keyword>
<keyword id="KW-0699">rRNA-binding</keyword>
<keyword id="KW-0820">tRNA-binding</keyword>
<reference key="1">
    <citation type="journal article" date="2009" name="PLoS Genet.">
        <title>Organised genome dynamics in the Escherichia coli species results in highly diverse adaptive paths.</title>
        <authorList>
            <person name="Touchon M."/>
            <person name="Hoede C."/>
            <person name="Tenaillon O."/>
            <person name="Barbe V."/>
            <person name="Baeriswyl S."/>
            <person name="Bidet P."/>
            <person name="Bingen E."/>
            <person name="Bonacorsi S."/>
            <person name="Bouchier C."/>
            <person name="Bouvet O."/>
            <person name="Calteau A."/>
            <person name="Chiapello H."/>
            <person name="Clermont O."/>
            <person name="Cruveiller S."/>
            <person name="Danchin A."/>
            <person name="Diard M."/>
            <person name="Dossat C."/>
            <person name="Karoui M.E."/>
            <person name="Frapy E."/>
            <person name="Garry L."/>
            <person name="Ghigo J.M."/>
            <person name="Gilles A.M."/>
            <person name="Johnson J."/>
            <person name="Le Bouguenec C."/>
            <person name="Lescat M."/>
            <person name="Mangenot S."/>
            <person name="Martinez-Jehanne V."/>
            <person name="Matic I."/>
            <person name="Nassif X."/>
            <person name="Oztas S."/>
            <person name="Petit M.A."/>
            <person name="Pichon C."/>
            <person name="Rouy Z."/>
            <person name="Ruf C.S."/>
            <person name="Schneider D."/>
            <person name="Tourret J."/>
            <person name="Vacherie B."/>
            <person name="Vallenet D."/>
            <person name="Medigue C."/>
            <person name="Rocha E.P.C."/>
            <person name="Denamur E."/>
        </authorList>
    </citation>
    <scope>NUCLEOTIDE SEQUENCE [LARGE SCALE GENOMIC DNA]</scope>
    <source>
        <strain>S88 / ExPEC</strain>
    </source>
</reference>
<evidence type="ECO:0000255" key="1">
    <source>
        <dbReference type="HAMAP-Rule" id="MF_00480"/>
    </source>
</evidence>
<evidence type="ECO:0000305" key="2"/>
<dbReference type="EMBL" id="CU928161">
    <property type="protein sequence ID" value="CAR04945.1"/>
    <property type="molecule type" value="Genomic_DNA"/>
</dbReference>
<dbReference type="RefSeq" id="WP_001138043.1">
    <property type="nucleotide sequence ID" value="NC_011742.1"/>
</dbReference>
<dbReference type="EMDB" id="EMD-7014"/>
<dbReference type="EMDB" id="EMD-7015"/>
<dbReference type="EMDB" id="EMD-7016"/>
<dbReference type="EMDB" id="EMD-7970"/>
<dbReference type="EMDB" id="EMD-8826"/>
<dbReference type="EMDB" id="EMD-8829"/>
<dbReference type="SMR" id="B7MCV6"/>
<dbReference type="IntAct" id="B7MCV6">
    <property type="interactions" value="1"/>
</dbReference>
<dbReference type="GeneID" id="93778657"/>
<dbReference type="KEGG" id="ecz:ECS88_3729"/>
<dbReference type="HOGENOM" id="CLU_072226_1_1_6"/>
<dbReference type="Proteomes" id="UP000000747">
    <property type="component" value="Chromosome"/>
</dbReference>
<dbReference type="GO" id="GO:0015935">
    <property type="term" value="C:small ribosomal subunit"/>
    <property type="evidence" value="ECO:0007669"/>
    <property type="project" value="InterPro"/>
</dbReference>
<dbReference type="GO" id="GO:0019843">
    <property type="term" value="F:rRNA binding"/>
    <property type="evidence" value="ECO:0007669"/>
    <property type="project" value="UniProtKB-UniRule"/>
</dbReference>
<dbReference type="GO" id="GO:0003735">
    <property type="term" value="F:structural constituent of ribosome"/>
    <property type="evidence" value="ECO:0007669"/>
    <property type="project" value="InterPro"/>
</dbReference>
<dbReference type="GO" id="GO:0000049">
    <property type="term" value="F:tRNA binding"/>
    <property type="evidence" value="ECO:0007669"/>
    <property type="project" value="UniProtKB-UniRule"/>
</dbReference>
<dbReference type="GO" id="GO:0006412">
    <property type="term" value="P:translation"/>
    <property type="evidence" value="ECO:0007669"/>
    <property type="project" value="UniProtKB-UniRule"/>
</dbReference>
<dbReference type="CDD" id="cd14869">
    <property type="entry name" value="uS7_Bacteria"/>
    <property type="match status" value="1"/>
</dbReference>
<dbReference type="FunFam" id="1.10.455.10:FF:000001">
    <property type="entry name" value="30S ribosomal protein S7"/>
    <property type="match status" value="1"/>
</dbReference>
<dbReference type="Gene3D" id="1.10.455.10">
    <property type="entry name" value="Ribosomal protein S7 domain"/>
    <property type="match status" value="1"/>
</dbReference>
<dbReference type="HAMAP" id="MF_00480_B">
    <property type="entry name" value="Ribosomal_uS7_B"/>
    <property type="match status" value="1"/>
</dbReference>
<dbReference type="InterPro" id="IPR000235">
    <property type="entry name" value="Ribosomal_uS7"/>
</dbReference>
<dbReference type="InterPro" id="IPR005717">
    <property type="entry name" value="Ribosomal_uS7_bac/org-type"/>
</dbReference>
<dbReference type="InterPro" id="IPR020606">
    <property type="entry name" value="Ribosomal_uS7_CS"/>
</dbReference>
<dbReference type="InterPro" id="IPR023798">
    <property type="entry name" value="Ribosomal_uS7_dom"/>
</dbReference>
<dbReference type="InterPro" id="IPR036823">
    <property type="entry name" value="Ribosomal_uS7_dom_sf"/>
</dbReference>
<dbReference type="NCBIfam" id="TIGR01029">
    <property type="entry name" value="rpsG_bact"/>
    <property type="match status" value="1"/>
</dbReference>
<dbReference type="PANTHER" id="PTHR11205">
    <property type="entry name" value="RIBOSOMAL PROTEIN S7"/>
    <property type="match status" value="1"/>
</dbReference>
<dbReference type="Pfam" id="PF00177">
    <property type="entry name" value="Ribosomal_S7"/>
    <property type="match status" value="1"/>
</dbReference>
<dbReference type="PIRSF" id="PIRSF002122">
    <property type="entry name" value="RPS7p_RPS7a_RPS5e_RPS7o"/>
    <property type="match status" value="1"/>
</dbReference>
<dbReference type="SUPFAM" id="SSF47973">
    <property type="entry name" value="Ribosomal protein S7"/>
    <property type="match status" value="1"/>
</dbReference>
<dbReference type="PROSITE" id="PS00052">
    <property type="entry name" value="RIBOSOMAL_S7"/>
    <property type="match status" value="1"/>
</dbReference>
<gene>
    <name evidence="1" type="primary">rpsG</name>
    <name type="ordered locus">ECS88_3729</name>
</gene>
<sequence>MPRRRVIGQRKILPDPKFGSELLAKFVNILMVDGKKSTAESIVYSALETLAQRSGKSELEAFEVALENVRPTVEVKSRRVGGSTYQVPVEVRPVRRNALAMRWIVEAARKRGDKSMALRLANELSDAAENKGTAVKKREDVHRMAEANKAFAHYRW</sequence>